<reference key="1">
    <citation type="journal article" date="2007" name="PLoS ONE">
        <title>Paradoxical DNA repair and peroxide resistance gene conservation in Bacillus pumilus SAFR-032.</title>
        <authorList>
            <person name="Gioia J."/>
            <person name="Yerrapragada S."/>
            <person name="Qin X."/>
            <person name="Jiang H."/>
            <person name="Igboeli O.C."/>
            <person name="Muzny D."/>
            <person name="Dugan-Rocha S."/>
            <person name="Ding Y."/>
            <person name="Hawes A."/>
            <person name="Liu W."/>
            <person name="Perez L."/>
            <person name="Kovar C."/>
            <person name="Dinh H."/>
            <person name="Lee S."/>
            <person name="Nazareth L."/>
            <person name="Blyth P."/>
            <person name="Holder M."/>
            <person name="Buhay C."/>
            <person name="Tirumalai M.R."/>
            <person name="Liu Y."/>
            <person name="Dasgupta I."/>
            <person name="Bokhetache L."/>
            <person name="Fujita M."/>
            <person name="Karouia F."/>
            <person name="Eswara Moorthy P."/>
            <person name="Siefert J."/>
            <person name="Uzman A."/>
            <person name="Buzumbo P."/>
            <person name="Verma A."/>
            <person name="Zwiya H."/>
            <person name="McWilliams B.D."/>
            <person name="Olowu A."/>
            <person name="Clinkenbeard K.D."/>
            <person name="Newcombe D."/>
            <person name="Golebiewski L."/>
            <person name="Petrosino J.F."/>
            <person name="Nicholson W.L."/>
            <person name="Fox G.E."/>
            <person name="Venkateswaran K."/>
            <person name="Highlander S.K."/>
            <person name="Weinstock G.M."/>
        </authorList>
    </citation>
    <scope>NUCLEOTIDE SEQUENCE [LARGE SCALE GENOMIC DNA]</scope>
    <source>
        <strain>SAFR-032</strain>
    </source>
</reference>
<sequence>MSPTMFTIISILLSLICLVVGYFVRKTIAEAKISGARNMAEQIVEDAKRDAEALKKEALLEAKDEIHSFRVEAEQEVRERRNELQRQENRLLQKEENLDRKDESLDKRESLLEKRDHSLNERQQHIEEMESKVDDMIRLQKAELERISSLTRDEAKQIILDQVENELSHDIAVMTKESENRAKEEADKKAKNILSLALQRCAADHVAETTVSVVNLPNDEMKGRIIGREGRNIRTLETLTGIDLIIDDTPEAVILSGFDPIRRETARIALDKLVQDGRIHPARIEEMVEKSRREVDDYIREMGEQTTFEVGVHGLHPDLIKILGRLKFRTSYGQNVLKHSIEVAHLAGLMASELGEDAKLAKRAGLLHDIGKAIDHEVEGSHVEIGVELATKYKEHPVVINSIASHHGDQEPTSIIAVLVAAADALSAARPGARSETLENYIRRLEKLEDISESYEGVEKSFAIQAGREVRIMVKPDSINDLEAHRLARDIRKRIEDELDYPGHIKVTVIRETRAVEYAK</sequence>
<accession>A8FDG4</accession>
<name>RNY_BACP2</name>
<comment type="function">
    <text evidence="1">Endoribonuclease that initiates mRNA decay.</text>
</comment>
<comment type="subcellular location">
    <subcellularLocation>
        <location evidence="1">Cell membrane</location>
        <topology evidence="1">Single-pass membrane protein</topology>
    </subcellularLocation>
</comment>
<comment type="similarity">
    <text evidence="1">Belongs to the RNase Y family.</text>
</comment>
<keyword id="KW-1003">Cell membrane</keyword>
<keyword id="KW-0255">Endonuclease</keyword>
<keyword id="KW-0378">Hydrolase</keyword>
<keyword id="KW-0472">Membrane</keyword>
<keyword id="KW-0540">Nuclease</keyword>
<keyword id="KW-0694">RNA-binding</keyword>
<keyword id="KW-0812">Transmembrane</keyword>
<keyword id="KW-1133">Transmembrane helix</keyword>
<organism>
    <name type="scientific">Bacillus pumilus (strain SAFR-032)</name>
    <dbReference type="NCBI Taxonomy" id="315750"/>
    <lineage>
        <taxon>Bacteria</taxon>
        <taxon>Bacillati</taxon>
        <taxon>Bacillota</taxon>
        <taxon>Bacilli</taxon>
        <taxon>Bacillales</taxon>
        <taxon>Bacillaceae</taxon>
        <taxon>Bacillus</taxon>
    </lineage>
</organism>
<feature type="chain" id="PRO_0000344820" description="Ribonuclease Y">
    <location>
        <begin position="1"/>
        <end position="520"/>
    </location>
</feature>
<feature type="transmembrane region" description="Helical" evidence="1">
    <location>
        <begin position="4"/>
        <end position="24"/>
    </location>
</feature>
<feature type="domain" description="KH" evidence="1">
    <location>
        <begin position="210"/>
        <end position="273"/>
    </location>
</feature>
<feature type="domain" description="HD" evidence="2">
    <location>
        <begin position="336"/>
        <end position="429"/>
    </location>
</feature>
<proteinExistence type="inferred from homology"/>
<gene>
    <name evidence="1" type="primary">rny</name>
    <name type="ordered locus">BPUM_1599</name>
</gene>
<dbReference type="EC" id="3.1.-.-" evidence="1"/>
<dbReference type="EMBL" id="CP000813">
    <property type="protein sequence ID" value="ABV62281.1"/>
    <property type="molecule type" value="Genomic_DNA"/>
</dbReference>
<dbReference type="RefSeq" id="WP_003211958.1">
    <property type="nucleotide sequence ID" value="NZ_VEIS01000003.1"/>
</dbReference>
<dbReference type="SMR" id="A8FDG4"/>
<dbReference type="STRING" id="315750.BPUM_1599"/>
<dbReference type="GeneID" id="66363197"/>
<dbReference type="KEGG" id="bpu:BPUM_1599"/>
<dbReference type="eggNOG" id="COG1418">
    <property type="taxonomic scope" value="Bacteria"/>
</dbReference>
<dbReference type="HOGENOM" id="CLU_028328_1_0_9"/>
<dbReference type="OrthoDB" id="9803205at2"/>
<dbReference type="Proteomes" id="UP000001355">
    <property type="component" value="Chromosome"/>
</dbReference>
<dbReference type="GO" id="GO:0005886">
    <property type="term" value="C:plasma membrane"/>
    <property type="evidence" value="ECO:0007669"/>
    <property type="project" value="UniProtKB-SubCell"/>
</dbReference>
<dbReference type="GO" id="GO:0003723">
    <property type="term" value="F:RNA binding"/>
    <property type="evidence" value="ECO:0007669"/>
    <property type="project" value="UniProtKB-UniRule"/>
</dbReference>
<dbReference type="GO" id="GO:0004521">
    <property type="term" value="F:RNA endonuclease activity"/>
    <property type="evidence" value="ECO:0007669"/>
    <property type="project" value="UniProtKB-UniRule"/>
</dbReference>
<dbReference type="GO" id="GO:0006402">
    <property type="term" value="P:mRNA catabolic process"/>
    <property type="evidence" value="ECO:0007669"/>
    <property type="project" value="UniProtKB-UniRule"/>
</dbReference>
<dbReference type="CDD" id="cd00077">
    <property type="entry name" value="HDc"/>
    <property type="match status" value="1"/>
</dbReference>
<dbReference type="CDD" id="cd22431">
    <property type="entry name" value="KH-I_RNaseY"/>
    <property type="match status" value="1"/>
</dbReference>
<dbReference type="FunFam" id="1.10.3210.10:FF:000003">
    <property type="entry name" value="Ribonuclease Y"/>
    <property type="match status" value="1"/>
</dbReference>
<dbReference type="FunFam" id="3.30.1370.10:FF:000006">
    <property type="entry name" value="Ribonuclease Y"/>
    <property type="match status" value="1"/>
</dbReference>
<dbReference type="Gene3D" id="1.10.3210.10">
    <property type="entry name" value="Hypothetical protein af1432"/>
    <property type="match status" value="1"/>
</dbReference>
<dbReference type="Gene3D" id="3.30.1370.10">
    <property type="entry name" value="K Homology domain, type 1"/>
    <property type="match status" value="1"/>
</dbReference>
<dbReference type="HAMAP" id="MF_00335">
    <property type="entry name" value="RNase_Y"/>
    <property type="match status" value="1"/>
</dbReference>
<dbReference type="InterPro" id="IPR003607">
    <property type="entry name" value="HD/PDEase_dom"/>
</dbReference>
<dbReference type="InterPro" id="IPR006674">
    <property type="entry name" value="HD_domain"/>
</dbReference>
<dbReference type="InterPro" id="IPR006675">
    <property type="entry name" value="HDIG_dom"/>
</dbReference>
<dbReference type="InterPro" id="IPR004087">
    <property type="entry name" value="KH_dom"/>
</dbReference>
<dbReference type="InterPro" id="IPR004088">
    <property type="entry name" value="KH_dom_type_1"/>
</dbReference>
<dbReference type="InterPro" id="IPR036612">
    <property type="entry name" value="KH_dom_type_1_sf"/>
</dbReference>
<dbReference type="InterPro" id="IPR017705">
    <property type="entry name" value="Ribonuclease_Y"/>
</dbReference>
<dbReference type="InterPro" id="IPR022711">
    <property type="entry name" value="RNase_Y_N"/>
</dbReference>
<dbReference type="NCBIfam" id="TIGR00277">
    <property type="entry name" value="HDIG"/>
    <property type="match status" value="1"/>
</dbReference>
<dbReference type="NCBIfam" id="TIGR03319">
    <property type="entry name" value="RNase_Y"/>
    <property type="match status" value="1"/>
</dbReference>
<dbReference type="PANTHER" id="PTHR12826">
    <property type="entry name" value="RIBONUCLEASE Y"/>
    <property type="match status" value="1"/>
</dbReference>
<dbReference type="PANTHER" id="PTHR12826:SF15">
    <property type="entry name" value="RIBONUCLEASE Y"/>
    <property type="match status" value="1"/>
</dbReference>
<dbReference type="Pfam" id="PF01966">
    <property type="entry name" value="HD"/>
    <property type="match status" value="1"/>
</dbReference>
<dbReference type="Pfam" id="PF00013">
    <property type="entry name" value="KH_1"/>
    <property type="match status" value="1"/>
</dbReference>
<dbReference type="Pfam" id="PF12072">
    <property type="entry name" value="RNase_Y_N"/>
    <property type="match status" value="1"/>
</dbReference>
<dbReference type="SMART" id="SM00471">
    <property type="entry name" value="HDc"/>
    <property type="match status" value="1"/>
</dbReference>
<dbReference type="SMART" id="SM00322">
    <property type="entry name" value="KH"/>
    <property type="match status" value="1"/>
</dbReference>
<dbReference type="SUPFAM" id="SSF54791">
    <property type="entry name" value="Eukaryotic type KH-domain (KH-domain type I)"/>
    <property type="match status" value="1"/>
</dbReference>
<dbReference type="SUPFAM" id="SSF109604">
    <property type="entry name" value="HD-domain/PDEase-like"/>
    <property type="match status" value="1"/>
</dbReference>
<dbReference type="PROSITE" id="PS51831">
    <property type="entry name" value="HD"/>
    <property type="match status" value="1"/>
</dbReference>
<dbReference type="PROSITE" id="PS50084">
    <property type="entry name" value="KH_TYPE_1"/>
    <property type="match status" value="1"/>
</dbReference>
<protein>
    <recommendedName>
        <fullName evidence="1">Ribonuclease Y</fullName>
        <shortName evidence="1">RNase Y</shortName>
        <ecNumber evidence="1">3.1.-.-</ecNumber>
    </recommendedName>
</protein>
<evidence type="ECO:0000255" key="1">
    <source>
        <dbReference type="HAMAP-Rule" id="MF_00335"/>
    </source>
</evidence>
<evidence type="ECO:0000255" key="2">
    <source>
        <dbReference type="PROSITE-ProRule" id="PRU01175"/>
    </source>
</evidence>